<feature type="chain" id="PRO_1000071427" description="Tryptophan synthase beta chain">
    <location>
        <begin position="1"/>
        <end position="392"/>
    </location>
</feature>
<feature type="modified residue" description="N6-(pyridoxal phosphate)lysine" evidence="1">
    <location>
        <position position="84"/>
    </location>
</feature>
<keyword id="KW-0028">Amino-acid biosynthesis</keyword>
<keyword id="KW-0057">Aromatic amino acid biosynthesis</keyword>
<keyword id="KW-0456">Lyase</keyword>
<keyword id="KW-0663">Pyridoxal phosphate</keyword>
<keyword id="KW-0822">Tryptophan biosynthesis</keyword>
<sequence>MKKAYYGDFGGQFLPESAMFALNELEGAFLKFSKDKLFKKELNELLKTYVGRPTPLYFARNLSKKYQHEIYLKREDLNHTGAHKINNAIAQALLAKKMGKKKIIAETGAGQHGLATATAAALLGLECEIYMGATDVQRQALNVYKMELLGAKIHAVQSGLKTLKEATTAAIQAWVGDIKNIFYVVGSAVGPYPYPKMVMHFQSIIGKECKMQLQKLNKKVDYIIAAVGGGSNAAGIFYDFIKDENVKLIGIEAGGLGIDTPYHAATLNKGKTGIIHGMKTKVLQDDLGNILPVHSVSAGLDYPGIGPLHAFLFESKRAQYHAISDEECMQALKLLCKEEGIIAAIESSHALAFLEKLCPTLKKKSVIVVNLSGRGDKDMQMIRDYKKGVIYG</sequence>
<comment type="function">
    <text evidence="1">The beta subunit is responsible for the synthesis of L-tryptophan from indole and L-serine.</text>
</comment>
<comment type="catalytic activity">
    <reaction evidence="1">
        <text>(1S,2R)-1-C-(indol-3-yl)glycerol 3-phosphate + L-serine = D-glyceraldehyde 3-phosphate + L-tryptophan + H2O</text>
        <dbReference type="Rhea" id="RHEA:10532"/>
        <dbReference type="ChEBI" id="CHEBI:15377"/>
        <dbReference type="ChEBI" id="CHEBI:33384"/>
        <dbReference type="ChEBI" id="CHEBI:57912"/>
        <dbReference type="ChEBI" id="CHEBI:58866"/>
        <dbReference type="ChEBI" id="CHEBI:59776"/>
        <dbReference type="EC" id="4.2.1.20"/>
    </reaction>
</comment>
<comment type="cofactor">
    <cofactor evidence="1">
        <name>pyridoxal 5'-phosphate</name>
        <dbReference type="ChEBI" id="CHEBI:597326"/>
    </cofactor>
</comment>
<comment type="pathway">
    <text evidence="1">Amino-acid biosynthesis; L-tryptophan biosynthesis; L-tryptophan from chorismate: step 5/5.</text>
</comment>
<comment type="subunit">
    <text evidence="1">Tetramer of two alpha and two beta chains.</text>
</comment>
<comment type="similarity">
    <text evidence="1">Belongs to the TrpB family.</text>
</comment>
<proteinExistence type="inferred from homology"/>
<gene>
    <name evidence="1" type="primary">trpB</name>
    <name type="ordered locus">C8J_0325</name>
</gene>
<accession>A8FKD7</accession>
<organism>
    <name type="scientific">Campylobacter jejuni subsp. jejuni serotype O:6 (strain 81116 / NCTC 11828)</name>
    <dbReference type="NCBI Taxonomy" id="407148"/>
    <lineage>
        <taxon>Bacteria</taxon>
        <taxon>Pseudomonadati</taxon>
        <taxon>Campylobacterota</taxon>
        <taxon>Epsilonproteobacteria</taxon>
        <taxon>Campylobacterales</taxon>
        <taxon>Campylobacteraceae</taxon>
        <taxon>Campylobacter</taxon>
    </lineage>
</organism>
<reference key="1">
    <citation type="journal article" date="2007" name="J. Bacteriol.">
        <title>The complete genome sequence of Campylobacter jejuni strain 81116 (NCTC11828).</title>
        <authorList>
            <person name="Pearson B.M."/>
            <person name="Gaskin D.J.H."/>
            <person name="Segers R.P.A.M."/>
            <person name="Wells J.M."/>
            <person name="Nuijten P.J.M."/>
            <person name="van Vliet A.H.M."/>
        </authorList>
    </citation>
    <scope>NUCLEOTIDE SEQUENCE [LARGE SCALE GENOMIC DNA]</scope>
    <source>
        <strain>81116 / NCTC 11828</strain>
    </source>
</reference>
<dbReference type="EC" id="4.2.1.20" evidence="1"/>
<dbReference type="EMBL" id="CP000814">
    <property type="protein sequence ID" value="ABV51924.1"/>
    <property type="molecule type" value="Genomic_DNA"/>
</dbReference>
<dbReference type="RefSeq" id="WP_002854204.1">
    <property type="nucleotide sequence ID" value="NC_009839.1"/>
</dbReference>
<dbReference type="SMR" id="A8FKD7"/>
<dbReference type="KEGG" id="cju:C8J_0325"/>
<dbReference type="HOGENOM" id="CLU_016734_3_1_7"/>
<dbReference type="UniPathway" id="UPA00035">
    <property type="reaction ID" value="UER00044"/>
</dbReference>
<dbReference type="GO" id="GO:0005737">
    <property type="term" value="C:cytoplasm"/>
    <property type="evidence" value="ECO:0007669"/>
    <property type="project" value="TreeGrafter"/>
</dbReference>
<dbReference type="GO" id="GO:0004834">
    <property type="term" value="F:tryptophan synthase activity"/>
    <property type="evidence" value="ECO:0007669"/>
    <property type="project" value="UniProtKB-UniRule"/>
</dbReference>
<dbReference type="CDD" id="cd06446">
    <property type="entry name" value="Trp-synth_B"/>
    <property type="match status" value="1"/>
</dbReference>
<dbReference type="FunFam" id="3.40.50.1100:FF:000004">
    <property type="entry name" value="Tryptophan synthase beta chain"/>
    <property type="match status" value="1"/>
</dbReference>
<dbReference type="Gene3D" id="3.40.50.1100">
    <property type="match status" value="2"/>
</dbReference>
<dbReference type="HAMAP" id="MF_00133">
    <property type="entry name" value="Trp_synth_beta"/>
    <property type="match status" value="1"/>
</dbReference>
<dbReference type="InterPro" id="IPR006653">
    <property type="entry name" value="Trp_synth_b_CS"/>
</dbReference>
<dbReference type="InterPro" id="IPR006654">
    <property type="entry name" value="Trp_synth_beta"/>
</dbReference>
<dbReference type="InterPro" id="IPR023026">
    <property type="entry name" value="Trp_synth_beta/beta-like"/>
</dbReference>
<dbReference type="InterPro" id="IPR001926">
    <property type="entry name" value="TrpB-like_PALP"/>
</dbReference>
<dbReference type="InterPro" id="IPR036052">
    <property type="entry name" value="TrpB-like_PALP_sf"/>
</dbReference>
<dbReference type="NCBIfam" id="TIGR00263">
    <property type="entry name" value="trpB"/>
    <property type="match status" value="1"/>
</dbReference>
<dbReference type="PANTHER" id="PTHR48077:SF3">
    <property type="entry name" value="TRYPTOPHAN SYNTHASE"/>
    <property type="match status" value="1"/>
</dbReference>
<dbReference type="PANTHER" id="PTHR48077">
    <property type="entry name" value="TRYPTOPHAN SYNTHASE-RELATED"/>
    <property type="match status" value="1"/>
</dbReference>
<dbReference type="Pfam" id="PF00291">
    <property type="entry name" value="PALP"/>
    <property type="match status" value="1"/>
</dbReference>
<dbReference type="PIRSF" id="PIRSF001413">
    <property type="entry name" value="Trp_syn_beta"/>
    <property type="match status" value="1"/>
</dbReference>
<dbReference type="SUPFAM" id="SSF53686">
    <property type="entry name" value="Tryptophan synthase beta subunit-like PLP-dependent enzymes"/>
    <property type="match status" value="1"/>
</dbReference>
<dbReference type="PROSITE" id="PS00168">
    <property type="entry name" value="TRP_SYNTHASE_BETA"/>
    <property type="match status" value="1"/>
</dbReference>
<evidence type="ECO:0000255" key="1">
    <source>
        <dbReference type="HAMAP-Rule" id="MF_00133"/>
    </source>
</evidence>
<name>TRPB_CAMJ8</name>
<protein>
    <recommendedName>
        <fullName evidence="1">Tryptophan synthase beta chain</fullName>
        <ecNumber evidence="1">4.2.1.20</ecNumber>
    </recommendedName>
</protein>